<dbReference type="EMBL" id="CP001635">
    <property type="protein sequence ID" value="ACS21660.1"/>
    <property type="molecule type" value="Genomic_DNA"/>
</dbReference>
<dbReference type="SMR" id="C5CQ88"/>
<dbReference type="STRING" id="543728.Vapar_5058"/>
<dbReference type="KEGG" id="vap:Vapar_5058"/>
<dbReference type="eggNOG" id="COG0094">
    <property type="taxonomic scope" value="Bacteria"/>
</dbReference>
<dbReference type="HOGENOM" id="CLU_061015_2_1_4"/>
<dbReference type="OrthoDB" id="9806626at2"/>
<dbReference type="GO" id="GO:1990904">
    <property type="term" value="C:ribonucleoprotein complex"/>
    <property type="evidence" value="ECO:0007669"/>
    <property type="project" value="UniProtKB-KW"/>
</dbReference>
<dbReference type="GO" id="GO:0005840">
    <property type="term" value="C:ribosome"/>
    <property type="evidence" value="ECO:0007669"/>
    <property type="project" value="UniProtKB-KW"/>
</dbReference>
<dbReference type="GO" id="GO:0019843">
    <property type="term" value="F:rRNA binding"/>
    <property type="evidence" value="ECO:0007669"/>
    <property type="project" value="UniProtKB-UniRule"/>
</dbReference>
<dbReference type="GO" id="GO:0003735">
    <property type="term" value="F:structural constituent of ribosome"/>
    <property type="evidence" value="ECO:0007669"/>
    <property type="project" value="InterPro"/>
</dbReference>
<dbReference type="GO" id="GO:0000049">
    <property type="term" value="F:tRNA binding"/>
    <property type="evidence" value="ECO:0007669"/>
    <property type="project" value="UniProtKB-UniRule"/>
</dbReference>
<dbReference type="GO" id="GO:0006412">
    <property type="term" value="P:translation"/>
    <property type="evidence" value="ECO:0007669"/>
    <property type="project" value="UniProtKB-UniRule"/>
</dbReference>
<dbReference type="FunFam" id="3.30.1440.10:FF:000001">
    <property type="entry name" value="50S ribosomal protein L5"/>
    <property type="match status" value="1"/>
</dbReference>
<dbReference type="Gene3D" id="3.30.1440.10">
    <property type="match status" value="1"/>
</dbReference>
<dbReference type="HAMAP" id="MF_01333_B">
    <property type="entry name" value="Ribosomal_uL5_B"/>
    <property type="match status" value="1"/>
</dbReference>
<dbReference type="InterPro" id="IPR002132">
    <property type="entry name" value="Ribosomal_uL5"/>
</dbReference>
<dbReference type="InterPro" id="IPR020930">
    <property type="entry name" value="Ribosomal_uL5_bac-type"/>
</dbReference>
<dbReference type="InterPro" id="IPR031309">
    <property type="entry name" value="Ribosomal_uL5_C"/>
</dbReference>
<dbReference type="InterPro" id="IPR020929">
    <property type="entry name" value="Ribosomal_uL5_CS"/>
</dbReference>
<dbReference type="InterPro" id="IPR022803">
    <property type="entry name" value="Ribosomal_uL5_dom_sf"/>
</dbReference>
<dbReference type="InterPro" id="IPR031310">
    <property type="entry name" value="Ribosomal_uL5_N"/>
</dbReference>
<dbReference type="NCBIfam" id="NF000585">
    <property type="entry name" value="PRK00010.1"/>
    <property type="match status" value="1"/>
</dbReference>
<dbReference type="PANTHER" id="PTHR11994">
    <property type="entry name" value="60S RIBOSOMAL PROTEIN L11-RELATED"/>
    <property type="match status" value="1"/>
</dbReference>
<dbReference type="Pfam" id="PF00281">
    <property type="entry name" value="Ribosomal_L5"/>
    <property type="match status" value="1"/>
</dbReference>
<dbReference type="Pfam" id="PF00673">
    <property type="entry name" value="Ribosomal_L5_C"/>
    <property type="match status" value="1"/>
</dbReference>
<dbReference type="PIRSF" id="PIRSF002161">
    <property type="entry name" value="Ribosomal_L5"/>
    <property type="match status" value="1"/>
</dbReference>
<dbReference type="SUPFAM" id="SSF55282">
    <property type="entry name" value="RL5-like"/>
    <property type="match status" value="1"/>
</dbReference>
<dbReference type="PROSITE" id="PS00358">
    <property type="entry name" value="RIBOSOMAL_L5"/>
    <property type="match status" value="1"/>
</dbReference>
<sequence length="179" mass="20097">MARLQQHYREKIAKDLTEKFGYKSPMQVPRLTKITLNMGVGEAVADKKVLDNAVADLTKIAGQKPVVTKSKKAIAGFKIRENQPIGCMVTLRGVQMYEFLDRFVTIALPRVRDFRGISGRAFDGRGNYNIGVKEQIIFPEIEYDKVDALRGLNISITTTAKTDEEAKALLAGFRFPFKN</sequence>
<reference key="1">
    <citation type="journal article" date="2011" name="J. Bacteriol.">
        <title>Complete genome sequence of the metabolically versatile plant growth-promoting endophyte, Variovorax paradoxus S110.</title>
        <authorList>
            <person name="Han J.I."/>
            <person name="Choi H.K."/>
            <person name="Lee S.W."/>
            <person name="Orwin P.M."/>
            <person name="Kim J."/>
            <person name="Laroe S.L."/>
            <person name="Kim T.G."/>
            <person name="O'Neil J."/>
            <person name="Leadbetter J.R."/>
            <person name="Lee S.Y."/>
            <person name="Hur C.G."/>
            <person name="Spain J.C."/>
            <person name="Ovchinnikova G."/>
            <person name="Goodwin L."/>
            <person name="Han C."/>
        </authorList>
    </citation>
    <scope>NUCLEOTIDE SEQUENCE [LARGE SCALE GENOMIC DNA]</scope>
    <source>
        <strain>S110</strain>
    </source>
</reference>
<gene>
    <name evidence="1" type="primary">rplE</name>
    <name type="ordered locus">Vapar_5058</name>
</gene>
<protein>
    <recommendedName>
        <fullName evidence="1">Large ribosomal subunit protein uL5</fullName>
    </recommendedName>
    <alternativeName>
        <fullName evidence="2">50S ribosomal protein L5</fullName>
    </alternativeName>
</protein>
<evidence type="ECO:0000255" key="1">
    <source>
        <dbReference type="HAMAP-Rule" id="MF_01333"/>
    </source>
</evidence>
<evidence type="ECO:0000305" key="2"/>
<feature type="chain" id="PRO_1000214645" description="Large ribosomal subunit protein uL5">
    <location>
        <begin position="1"/>
        <end position="179"/>
    </location>
</feature>
<proteinExistence type="inferred from homology"/>
<accession>C5CQ88</accession>
<keyword id="KW-0687">Ribonucleoprotein</keyword>
<keyword id="KW-0689">Ribosomal protein</keyword>
<keyword id="KW-0694">RNA-binding</keyword>
<keyword id="KW-0699">rRNA-binding</keyword>
<keyword id="KW-0820">tRNA-binding</keyword>
<organism>
    <name type="scientific">Variovorax paradoxus (strain S110)</name>
    <dbReference type="NCBI Taxonomy" id="543728"/>
    <lineage>
        <taxon>Bacteria</taxon>
        <taxon>Pseudomonadati</taxon>
        <taxon>Pseudomonadota</taxon>
        <taxon>Betaproteobacteria</taxon>
        <taxon>Burkholderiales</taxon>
        <taxon>Comamonadaceae</taxon>
        <taxon>Variovorax</taxon>
    </lineage>
</organism>
<comment type="function">
    <text evidence="1">This is one of the proteins that bind and probably mediate the attachment of the 5S RNA into the large ribosomal subunit, where it forms part of the central protuberance. In the 70S ribosome it contacts protein S13 of the 30S subunit (bridge B1b), connecting the 2 subunits; this bridge is implicated in subunit movement. Contacts the P site tRNA; the 5S rRNA and some of its associated proteins might help stabilize positioning of ribosome-bound tRNAs.</text>
</comment>
<comment type="subunit">
    <text evidence="1">Part of the 50S ribosomal subunit; part of the 5S rRNA/L5/L18/L25 subcomplex. Contacts the 5S rRNA and the P site tRNA. Forms a bridge to the 30S subunit in the 70S ribosome.</text>
</comment>
<comment type="similarity">
    <text evidence="1">Belongs to the universal ribosomal protein uL5 family.</text>
</comment>
<name>RL5_VARPS</name>